<reference key="1">
    <citation type="journal article" date="2003" name="Nature">
        <title>The genome sequence of the filamentous fungus Neurospora crassa.</title>
        <authorList>
            <person name="Galagan J.E."/>
            <person name="Calvo S.E."/>
            <person name="Borkovich K.A."/>
            <person name="Selker E.U."/>
            <person name="Read N.D."/>
            <person name="Jaffe D.B."/>
            <person name="FitzHugh W."/>
            <person name="Ma L.-J."/>
            <person name="Smirnov S."/>
            <person name="Purcell S."/>
            <person name="Rehman B."/>
            <person name="Elkins T."/>
            <person name="Engels R."/>
            <person name="Wang S."/>
            <person name="Nielsen C.B."/>
            <person name="Butler J."/>
            <person name="Endrizzi M."/>
            <person name="Qui D."/>
            <person name="Ianakiev P."/>
            <person name="Bell-Pedersen D."/>
            <person name="Nelson M.A."/>
            <person name="Werner-Washburne M."/>
            <person name="Selitrennikoff C.P."/>
            <person name="Kinsey J.A."/>
            <person name="Braun E.L."/>
            <person name="Zelter A."/>
            <person name="Schulte U."/>
            <person name="Kothe G.O."/>
            <person name="Jedd G."/>
            <person name="Mewes H.-W."/>
            <person name="Staben C."/>
            <person name="Marcotte E."/>
            <person name="Greenberg D."/>
            <person name="Roy A."/>
            <person name="Foley K."/>
            <person name="Naylor J."/>
            <person name="Stange-Thomann N."/>
            <person name="Barrett R."/>
            <person name="Gnerre S."/>
            <person name="Kamal M."/>
            <person name="Kamvysselis M."/>
            <person name="Mauceli E.W."/>
            <person name="Bielke C."/>
            <person name="Rudd S."/>
            <person name="Frishman D."/>
            <person name="Krystofova S."/>
            <person name="Rasmussen C."/>
            <person name="Metzenberg R.L."/>
            <person name="Perkins D.D."/>
            <person name="Kroken S."/>
            <person name="Cogoni C."/>
            <person name="Macino G."/>
            <person name="Catcheside D.E.A."/>
            <person name="Li W."/>
            <person name="Pratt R.J."/>
            <person name="Osmani S.A."/>
            <person name="DeSouza C.P.C."/>
            <person name="Glass N.L."/>
            <person name="Orbach M.J."/>
            <person name="Berglund J.A."/>
            <person name="Voelker R."/>
            <person name="Yarden O."/>
            <person name="Plamann M."/>
            <person name="Seiler S."/>
            <person name="Dunlap J.C."/>
            <person name="Radford A."/>
            <person name="Aramayo R."/>
            <person name="Natvig D.O."/>
            <person name="Alex L.A."/>
            <person name="Mannhaupt G."/>
            <person name="Ebbole D.J."/>
            <person name="Freitag M."/>
            <person name="Paulsen I."/>
            <person name="Sachs M.S."/>
            <person name="Lander E.S."/>
            <person name="Nusbaum C."/>
            <person name="Birren B.W."/>
        </authorList>
    </citation>
    <scope>NUCLEOTIDE SEQUENCE [LARGE SCALE GENOMIC DNA]</scope>
    <source>
        <strain>ATCC 24698 / 74-OR23-1A / CBS 708.71 / DSM 1257 / FGSC 987</strain>
    </source>
</reference>
<reference key="2">
    <citation type="journal article" date="2004" name="Appl. Microbiol. Biotechnol.">
        <title>Identification of a type-D feruloyl esterase from Neurospora crassa.</title>
        <authorList>
            <person name="Crepin V.F."/>
            <person name="Faulds C.B."/>
            <person name="Connerton I.F."/>
        </authorList>
    </citation>
    <scope>FUNCTION</scope>
    <scope>CATALYTIC ACTIVITY</scope>
</reference>
<sequence>MAGLHSRLTTFLLLLLSALPAIAAAAPSSGCGKGPTLRNGQTVTTNINGKSRRYTVRLPDNYNQNNPYRLIFLWHPLGSSMQKIIQGEDPNRGGVLPYYGLPPLDTSKSAIYVVPDGLNAGWANQNGEDVSFFDNILQTVSDGLCIDTNLVFSTGFSYGGGMSFSLACSRANKVRAVAVISGAQLSGCAGGNDPVAYYAQHGTSDGVLNVAMGRQLRDRFVRNNGCQPANGEVQPGSGGRSTRVEYQGCQQGKDVVWVVHGGDHNPSQRDPGQNDPFAPRNTWEFFSRFN</sequence>
<evidence type="ECO:0000250" key="1">
    <source>
        <dbReference type="UniProtKB" id="O42807"/>
    </source>
</evidence>
<evidence type="ECO:0000255" key="2"/>
<evidence type="ECO:0000256" key="3">
    <source>
        <dbReference type="SAM" id="MobiDB-lite"/>
    </source>
</evidence>
<evidence type="ECO:0000269" key="4">
    <source>
    </source>
</evidence>
<evidence type="ECO:0000303" key="5">
    <source>
    </source>
</evidence>
<evidence type="ECO:0000305" key="6"/>
<dbReference type="EC" id="3.1.1.73" evidence="4"/>
<dbReference type="EMBL" id="CM002238">
    <property type="protein sequence ID" value="EAA26992.1"/>
    <property type="molecule type" value="Genomic_DNA"/>
</dbReference>
<dbReference type="RefSeq" id="XP_956228.1">
    <property type="nucleotide sequence ID" value="XM_951135.1"/>
</dbReference>
<dbReference type="SMR" id="Q7RWX8"/>
<dbReference type="ESTHER" id="neucr-FAED">
    <property type="family name" value="FaeC"/>
</dbReference>
<dbReference type="PaxDb" id="5141-EFNCRP00000004770"/>
<dbReference type="EnsemblFungi" id="EAA26992">
    <property type="protein sequence ID" value="EAA26992"/>
    <property type="gene ID" value="NCU08785"/>
</dbReference>
<dbReference type="GeneID" id="3872386"/>
<dbReference type="KEGG" id="ncr:NCU08785"/>
<dbReference type="VEuPathDB" id="FungiDB:NCU08785"/>
<dbReference type="HOGENOM" id="CLU_027551_2_0_1"/>
<dbReference type="InParanoid" id="Q7RWX8"/>
<dbReference type="OMA" id="YAQHGTS"/>
<dbReference type="OrthoDB" id="424610at2759"/>
<dbReference type="Proteomes" id="UP000001805">
    <property type="component" value="Chromosome 3, Linkage Group III"/>
</dbReference>
<dbReference type="GO" id="GO:0005576">
    <property type="term" value="C:extracellular region"/>
    <property type="evidence" value="ECO:0007669"/>
    <property type="project" value="UniProtKB-SubCell"/>
</dbReference>
<dbReference type="GO" id="GO:0030600">
    <property type="term" value="F:feruloyl esterase activity"/>
    <property type="evidence" value="ECO:0007669"/>
    <property type="project" value="UniProtKB-EC"/>
</dbReference>
<dbReference type="GO" id="GO:0045493">
    <property type="term" value="P:xylan catabolic process"/>
    <property type="evidence" value="ECO:0007669"/>
    <property type="project" value="UniProtKB-KW"/>
</dbReference>
<dbReference type="Gene3D" id="3.40.50.1820">
    <property type="entry name" value="alpha/beta hydrolase"/>
    <property type="match status" value="1"/>
</dbReference>
<dbReference type="InterPro" id="IPR029058">
    <property type="entry name" value="AB_hydrolase_fold"/>
</dbReference>
<dbReference type="InterPro" id="IPR043595">
    <property type="entry name" value="FaeB/C/D"/>
</dbReference>
<dbReference type="PANTHER" id="PTHR38050">
    <property type="match status" value="1"/>
</dbReference>
<dbReference type="PANTHER" id="PTHR38050:SF3">
    <property type="entry name" value="FERULOYL ESTERASE D"/>
    <property type="match status" value="1"/>
</dbReference>
<dbReference type="SUPFAM" id="SSF53474">
    <property type="entry name" value="alpha/beta-Hydrolases"/>
    <property type="match status" value="1"/>
</dbReference>
<comment type="function">
    <text evidence="1 4">Involved in degradation of plant cell walls. Hydrolyzes the feruloyl-arabinose ester bond in arabinoxylans as well as the feruloyl-galactose and feruloyl-arabinose ester bonds in pectin (By similarity). Active against methyl esters of ferulate (MFA), sinapate (MSA), caffeate (MCA) and p-coumarate (MpCA) (PubMed:14595525).</text>
</comment>
<comment type="catalytic activity">
    <reaction evidence="4">
        <text>feruloyl-polysaccharide + H2O = ferulate + polysaccharide.</text>
        <dbReference type="EC" id="3.1.1.73"/>
    </reaction>
</comment>
<comment type="subcellular location">
    <subcellularLocation>
        <location evidence="1">Secreted</location>
    </subcellularLocation>
</comment>
<comment type="similarity">
    <text evidence="6">Belongs to the serine esterase family.</text>
</comment>
<proteinExistence type="evidence at protein level"/>
<gene>
    <name evidence="5" type="primary">faeD-3.544</name>
    <name type="ORF">NCU08785</name>
</gene>
<name>FAED_NEUCR</name>
<organism>
    <name type="scientific">Neurospora crassa (strain ATCC 24698 / 74-OR23-1A / CBS 708.71 / DSM 1257 / FGSC 987)</name>
    <dbReference type="NCBI Taxonomy" id="367110"/>
    <lineage>
        <taxon>Eukaryota</taxon>
        <taxon>Fungi</taxon>
        <taxon>Dikarya</taxon>
        <taxon>Ascomycota</taxon>
        <taxon>Pezizomycotina</taxon>
        <taxon>Sordariomycetes</taxon>
        <taxon>Sordariomycetidae</taxon>
        <taxon>Sordariales</taxon>
        <taxon>Sordariaceae</taxon>
        <taxon>Neurospora</taxon>
    </lineage>
</organism>
<protein>
    <recommendedName>
        <fullName evidence="5">Feruloyl esterase D</fullName>
        <ecNumber evidence="4">3.1.1.73</ecNumber>
    </recommendedName>
    <alternativeName>
        <fullName>Ferulic acid esterase D</fullName>
        <shortName>FAE</shortName>
    </alternativeName>
</protein>
<feature type="signal peptide" evidence="2">
    <location>
        <begin position="1"/>
        <end position="25"/>
    </location>
</feature>
<feature type="chain" id="PRO_0000433995" description="Feruloyl esterase D">
    <location>
        <begin position="26"/>
        <end position="290"/>
    </location>
</feature>
<feature type="region of interest" description="Disordered" evidence="3">
    <location>
        <begin position="260"/>
        <end position="280"/>
    </location>
</feature>
<keyword id="KW-0119">Carbohydrate metabolism</keyword>
<keyword id="KW-0378">Hydrolase</keyword>
<keyword id="KW-0624">Polysaccharide degradation</keyword>
<keyword id="KW-1185">Reference proteome</keyword>
<keyword id="KW-0964">Secreted</keyword>
<keyword id="KW-0719">Serine esterase</keyword>
<keyword id="KW-0732">Signal</keyword>
<keyword id="KW-0858">Xylan degradation</keyword>
<accession>Q7RWX8</accession>